<protein>
    <recommendedName>
        <fullName evidence="2">Small ribosomal subunit protein uS12</fullName>
    </recommendedName>
    <alternativeName>
        <fullName evidence="4">30S ribosomal protein S12</fullName>
    </alternativeName>
</protein>
<feature type="chain" id="PRO_0000146360" description="Small ribosomal subunit protein uS12">
    <location>
        <begin position="1"/>
        <end position="124"/>
    </location>
</feature>
<feature type="region of interest" description="Disordered" evidence="3">
    <location>
        <begin position="1"/>
        <end position="25"/>
    </location>
</feature>
<feature type="modified residue" description="3-methylthioaspartic acid" evidence="1">
    <location>
        <position position="89"/>
    </location>
</feature>
<organism>
    <name type="scientific">Xylella fastidiosa (strain Temecula1 / ATCC 700964)</name>
    <dbReference type="NCBI Taxonomy" id="183190"/>
    <lineage>
        <taxon>Bacteria</taxon>
        <taxon>Pseudomonadati</taxon>
        <taxon>Pseudomonadota</taxon>
        <taxon>Gammaproteobacteria</taxon>
        <taxon>Lysobacterales</taxon>
        <taxon>Lysobacteraceae</taxon>
        <taxon>Xylella</taxon>
    </lineage>
</organism>
<sequence>MATINQLVRKPRQASTYKSASPALDKCPQRRGVCTRVYTSTPKKPNSALRKVAKVRLTNQEEVISYIGGEGHNLQEHSVVLIRGGRVKDLPGVRYHTVRGSLDAAGVAKRRQGRSKYGAKRPKS</sequence>
<comment type="function">
    <text evidence="2">With S4 and S5 plays an important role in translational accuracy.</text>
</comment>
<comment type="function">
    <text evidence="2">Interacts with and stabilizes bases of the 16S rRNA that are involved in tRNA selection in the A site and with the mRNA backbone. Located at the interface of the 30S and 50S subunits, it traverses the body of the 30S subunit contacting proteins on the other side and probably holding the rRNA structure together. The combined cluster of proteins S8, S12 and S17 appears to hold together the shoulder and platform of the 30S subunit.</text>
</comment>
<comment type="subunit">
    <text evidence="2">Part of the 30S ribosomal subunit. Contacts proteins S8 and S17. May interact with IF1 in the 30S initiation complex.</text>
</comment>
<comment type="similarity">
    <text evidence="2">Belongs to the universal ribosomal protein uS12 family.</text>
</comment>
<gene>
    <name evidence="2" type="primary">rpsL</name>
    <name type="ordered locus">PD_1999</name>
</gene>
<proteinExistence type="inferred from homology"/>
<name>RS12_XYLFT</name>
<keyword id="KW-0488">Methylation</keyword>
<keyword id="KW-1185">Reference proteome</keyword>
<keyword id="KW-0687">Ribonucleoprotein</keyword>
<keyword id="KW-0689">Ribosomal protein</keyword>
<keyword id="KW-0694">RNA-binding</keyword>
<keyword id="KW-0699">rRNA-binding</keyword>
<keyword id="KW-0820">tRNA-binding</keyword>
<evidence type="ECO:0000250" key="1"/>
<evidence type="ECO:0000255" key="2">
    <source>
        <dbReference type="HAMAP-Rule" id="MF_00403"/>
    </source>
</evidence>
<evidence type="ECO:0000256" key="3">
    <source>
        <dbReference type="SAM" id="MobiDB-lite"/>
    </source>
</evidence>
<evidence type="ECO:0000305" key="4"/>
<dbReference type="EMBL" id="AE009442">
    <property type="protein sequence ID" value="AAO29828.1"/>
    <property type="molecule type" value="Genomic_DNA"/>
</dbReference>
<dbReference type="RefSeq" id="WP_004084687.1">
    <property type="nucleotide sequence ID" value="NC_004556.1"/>
</dbReference>
<dbReference type="SMR" id="P66380"/>
<dbReference type="GeneID" id="93905860"/>
<dbReference type="KEGG" id="xft:PD_1999"/>
<dbReference type="HOGENOM" id="CLU_104295_1_2_6"/>
<dbReference type="Proteomes" id="UP000002516">
    <property type="component" value="Chromosome"/>
</dbReference>
<dbReference type="GO" id="GO:0015935">
    <property type="term" value="C:small ribosomal subunit"/>
    <property type="evidence" value="ECO:0007669"/>
    <property type="project" value="InterPro"/>
</dbReference>
<dbReference type="GO" id="GO:0019843">
    <property type="term" value="F:rRNA binding"/>
    <property type="evidence" value="ECO:0007669"/>
    <property type="project" value="UniProtKB-UniRule"/>
</dbReference>
<dbReference type="GO" id="GO:0003735">
    <property type="term" value="F:structural constituent of ribosome"/>
    <property type="evidence" value="ECO:0007669"/>
    <property type="project" value="InterPro"/>
</dbReference>
<dbReference type="GO" id="GO:0000049">
    <property type="term" value="F:tRNA binding"/>
    <property type="evidence" value="ECO:0007669"/>
    <property type="project" value="UniProtKB-UniRule"/>
</dbReference>
<dbReference type="GO" id="GO:0006412">
    <property type="term" value="P:translation"/>
    <property type="evidence" value="ECO:0007669"/>
    <property type="project" value="UniProtKB-UniRule"/>
</dbReference>
<dbReference type="CDD" id="cd03368">
    <property type="entry name" value="Ribosomal_S12"/>
    <property type="match status" value="1"/>
</dbReference>
<dbReference type="FunFam" id="2.40.50.140:FF:000001">
    <property type="entry name" value="30S ribosomal protein S12"/>
    <property type="match status" value="1"/>
</dbReference>
<dbReference type="Gene3D" id="2.40.50.140">
    <property type="entry name" value="Nucleic acid-binding proteins"/>
    <property type="match status" value="1"/>
</dbReference>
<dbReference type="HAMAP" id="MF_00403_B">
    <property type="entry name" value="Ribosomal_uS12_B"/>
    <property type="match status" value="1"/>
</dbReference>
<dbReference type="InterPro" id="IPR012340">
    <property type="entry name" value="NA-bd_OB-fold"/>
</dbReference>
<dbReference type="InterPro" id="IPR006032">
    <property type="entry name" value="Ribosomal_uS12"/>
</dbReference>
<dbReference type="InterPro" id="IPR005679">
    <property type="entry name" value="Ribosomal_uS12_bac"/>
</dbReference>
<dbReference type="NCBIfam" id="TIGR00981">
    <property type="entry name" value="rpsL_bact"/>
    <property type="match status" value="1"/>
</dbReference>
<dbReference type="PANTHER" id="PTHR11652">
    <property type="entry name" value="30S RIBOSOMAL PROTEIN S12 FAMILY MEMBER"/>
    <property type="match status" value="1"/>
</dbReference>
<dbReference type="Pfam" id="PF00164">
    <property type="entry name" value="Ribosom_S12_S23"/>
    <property type="match status" value="1"/>
</dbReference>
<dbReference type="PIRSF" id="PIRSF002133">
    <property type="entry name" value="Ribosomal_S12/S23"/>
    <property type="match status" value="1"/>
</dbReference>
<dbReference type="PRINTS" id="PR01034">
    <property type="entry name" value="RIBOSOMALS12"/>
</dbReference>
<dbReference type="SUPFAM" id="SSF50249">
    <property type="entry name" value="Nucleic acid-binding proteins"/>
    <property type="match status" value="1"/>
</dbReference>
<dbReference type="PROSITE" id="PS00055">
    <property type="entry name" value="RIBOSOMAL_S12"/>
    <property type="match status" value="1"/>
</dbReference>
<accession>P66380</accession>
<accession>Q9PA88</accession>
<reference key="1">
    <citation type="journal article" date="2003" name="J. Bacteriol.">
        <title>Comparative analyses of the complete genome sequences of Pierce's disease and citrus variegated chlorosis strains of Xylella fastidiosa.</title>
        <authorList>
            <person name="Van Sluys M.A."/>
            <person name="de Oliveira M.C."/>
            <person name="Monteiro-Vitorello C.B."/>
            <person name="Miyaki C.Y."/>
            <person name="Furlan L.R."/>
            <person name="Camargo L.E.A."/>
            <person name="da Silva A.C.R."/>
            <person name="Moon D.H."/>
            <person name="Takita M.A."/>
            <person name="Lemos E.G.M."/>
            <person name="Machado M.A."/>
            <person name="Ferro M.I.T."/>
            <person name="da Silva F.R."/>
            <person name="Goldman M.H.S."/>
            <person name="Goldman G.H."/>
            <person name="Lemos M.V.F."/>
            <person name="El-Dorry H."/>
            <person name="Tsai S.M."/>
            <person name="Carrer H."/>
            <person name="Carraro D.M."/>
            <person name="de Oliveira R.C."/>
            <person name="Nunes L.R."/>
            <person name="Siqueira W.J."/>
            <person name="Coutinho L.L."/>
            <person name="Kimura E.T."/>
            <person name="Ferro E.S."/>
            <person name="Harakava R."/>
            <person name="Kuramae E.E."/>
            <person name="Marino C.L."/>
            <person name="Giglioti E."/>
            <person name="Abreu I.L."/>
            <person name="Alves L.M.C."/>
            <person name="do Amaral A.M."/>
            <person name="Baia G.S."/>
            <person name="Blanco S.R."/>
            <person name="Brito M.S."/>
            <person name="Cannavan F.S."/>
            <person name="Celestino A.V."/>
            <person name="da Cunha A.F."/>
            <person name="Fenille R.C."/>
            <person name="Ferro J.A."/>
            <person name="Formighieri E.F."/>
            <person name="Kishi L.T."/>
            <person name="Leoni S.G."/>
            <person name="Oliveira A.R."/>
            <person name="Rosa V.E. Jr."/>
            <person name="Sassaki F.T."/>
            <person name="Sena J.A.D."/>
            <person name="de Souza A.A."/>
            <person name="Truffi D."/>
            <person name="Tsukumo F."/>
            <person name="Yanai G.M."/>
            <person name="Zaros L.G."/>
            <person name="Civerolo E.L."/>
            <person name="Simpson A.J.G."/>
            <person name="Almeida N.F. Jr."/>
            <person name="Setubal J.C."/>
            <person name="Kitajima J.P."/>
        </authorList>
    </citation>
    <scope>NUCLEOTIDE SEQUENCE [LARGE SCALE GENOMIC DNA]</scope>
    <source>
        <strain>Temecula1 / ATCC 700964</strain>
    </source>
</reference>